<accession>A2C172</accession>
<feature type="chain" id="PRO_1000014466" description="Probable 2-phosphosulfolactate phosphatase">
    <location>
        <begin position="1"/>
        <end position="242"/>
    </location>
</feature>
<keyword id="KW-0378">Hydrolase</keyword>
<keyword id="KW-0460">Magnesium</keyword>
<gene>
    <name evidence="1" type="primary">comB</name>
    <name type="ordered locus">NATL1_06721</name>
</gene>
<evidence type="ECO:0000255" key="1">
    <source>
        <dbReference type="HAMAP-Rule" id="MF_00490"/>
    </source>
</evidence>
<comment type="catalytic activity">
    <reaction evidence="1">
        <text>(2R)-O-phospho-3-sulfolactate + H2O = (2R)-3-sulfolactate + phosphate</text>
        <dbReference type="Rhea" id="RHEA:23416"/>
        <dbReference type="ChEBI" id="CHEBI:15377"/>
        <dbReference type="ChEBI" id="CHEBI:15597"/>
        <dbReference type="ChEBI" id="CHEBI:43474"/>
        <dbReference type="ChEBI" id="CHEBI:58738"/>
        <dbReference type="EC" id="3.1.3.71"/>
    </reaction>
</comment>
<comment type="cofactor">
    <cofactor evidence="1">
        <name>Mg(2+)</name>
        <dbReference type="ChEBI" id="CHEBI:18420"/>
    </cofactor>
</comment>
<comment type="similarity">
    <text evidence="1">Belongs to the ComB family.</text>
</comment>
<proteinExistence type="inferred from homology"/>
<reference key="1">
    <citation type="journal article" date="2007" name="PLoS Genet.">
        <title>Patterns and implications of gene gain and loss in the evolution of Prochlorococcus.</title>
        <authorList>
            <person name="Kettler G.C."/>
            <person name="Martiny A.C."/>
            <person name="Huang K."/>
            <person name="Zucker J."/>
            <person name="Coleman M.L."/>
            <person name="Rodrigue S."/>
            <person name="Chen F."/>
            <person name="Lapidus A."/>
            <person name="Ferriera S."/>
            <person name="Johnson J."/>
            <person name="Steglich C."/>
            <person name="Church G.M."/>
            <person name="Richardson P."/>
            <person name="Chisholm S.W."/>
        </authorList>
    </citation>
    <scope>NUCLEOTIDE SEQUENCE [LARGE SCALE GENOMIC DNA]</scope>
    <source>
        <strain>NATL1A</strain>
    </source>
</reference>
<dbReference type="EC" id="3.1.3.71" evidence="1"/>
<dbReference type="EMBL" id="CP000553">
    <property type="protein sequence ID" value="ABM75232.1"/>
    <property type="molecule type" value="Genomic_DNA"/>
</dbReference>
<dbReference type="RefSeq" id="WP_011823393.1">
    <property type="nucleotide sequence ID" value="NC_008819.1"/>
</dbReference>
<dbReference type="SMR" id="A2C172"/>
<dbReference type="KEGG" id="pme:NATL1_06721"/>
<dbReference type="eggNOG" id="COG2045">
    <property type="taxonomic scope" value="Bacteria"/>
</dbReference>
<dbReference type="HOGENOM" id="CLU_070028_0_1_3"/>
<dbReference type="Proteomes" id="UP000002592">
    <property type="component" value="Chromosome"/>
</dbReference>
<dbReference type="GO" id="GO:0050532">
    <property type="term" value="F:2-phosphosulfolactate phosphatase activity"/>
    <property type="evidence" value="ECO:0007669"/>
    <property type="project" value="UniProtKB-UniRule"/>
</dbReference>
<dbReference type="GO" id="GO:0000287">
    <property type="term" value="F:magnesium ion binding"/>
    <property type="evidence" value="ECO:0007669"/>
    <property type="project" value="UniProtKB-UniRule"/>
</dbReference>
<dbReference type="GO" id="GO:0050545">
    <property type="term" value="F:sulfopyruvate decarboxylase activity"/>
    <property type="evidence" value="ECO:0007669"/>
    <property type="project" value="TreeGrafter"/>
</dbReference>
<dbReference type="FunFam" id="3.90.1560.10:FF:000001">
    <property type="entry name" value="Probable 2-phosphosulfolactate phosphatase"/>
    <property type="match status" value="1"/>
</dbReference>
<dbReference type="Gene3D" id="3.90.1560.10">
    <property type="entry name" value="ComB-like"/>
    <property type="match status" value="1"/>
</dbReference>
<dbReference type="HAMAP" id="MF_00490">
    <property type="entry name" value="ComB"/>
    <property type="match status" value="1"/>
</dbReference>
<dbReference type="InterPro" id="IPR005238">
    <property type="entry name" value="ComB-like"/>
</dbReference>
<dbReference type="InterPro" id="IPR036702">
    <property type="entry name" value="ComB-like_sf"/>
</dbReference>
<dbReference type="NCBIfam" id="NF002053">
    <property type="entry name" value="PRK00886.1-2"/>
    <property type="match status" value="1"/>
</dbReference>
<dbReference type="PANTHER" id="PTHR37311">
    <property type="entry name" value="2-PHOSPHOSULFOLACTATE PHOSPHATASE-RELATED"/>
    <property type="match status" value="1"/>
</dbReference>
<dbReference type="PANTHER" id="PTHR37311:SF1">
    <property type="entry name" value="2-PHOSPHOSULFOLACTATE PHOSPHATASE-RELATED"/>
    <property type="match status" value="1"/>
</dbReference>
<dbReference type="Pfam" id="PF04029">
    <property type="entry name" value="2-ph_phosp"/>
    <property type="match status" value="1"/>
</dbReference>
<dbReference type="SUPFAM" id="SSF142823">
    <property type="entry name" value="ComB-like"/>
    <property type="match status" value="1"/>
</dbReference>
<organism>
    <name type="scientific">Prochlorococcus marinus (strain NATL1A)</name>
    <dbReference type="NCBI Taxonomy" id="167555"/>
    <lineage>
        <taxon>Bacteria</taxon>
        <taxon>Bacillati</taxon>
        <taxon>Cyanobacteriota</taxon>
        <taxon>Cyanophyceae</taxon>
        <taxon>Synechococcales</taxon>
        <taxon>Prochlorococcaceae</taxon>
        <taxon>Prochlorococcus</taxon>
    </lineage>
</organism>
<sequence length="242" mass="26337">MKLSYFYVAADVPDGIIPESSVVIDVLRATTTIAWALENGADSVQVFADVDELKNQAKTFDSKEKILVGERGGKKLDGFDLGNSPLGVSSESVKGKRVFMSTTNGTRSLHRVRESKSLYTMALPNRKAIAERLKSDNPKEVWIVGSGWEGSYSLEDSLAAGALASLLMDQLESVQIVNDELMASIALWKNWENDVEGCLRIASHGQRLAGIGNHDDDFACCASLDNLSVIPKQIEMGVLRSN</sequence>
<name>COMB_PROM1</name>
<protein>
    <recommendedName>
        <fullName evidence="1">Probable 2-phosphosulfolactate phosphatase</fullName>
        <ecNumber evidence="1">3.1.3.71</ecNumber>
    </recommendedName>
</protein>